<sequence length="561" mass="60195">MNINVADLLNGNYILLLFVVLALGLCLGKLRLGSVQLGNSIGVLVVSLLLGQQHFSINTDALNLGFMLFIFCVGVEAGPNFFSIFFRDGKNYLMLALVMVGSALLIALGLGKLFGWDIGLTAGMLAGSMTSTPVLVGAGDTLRHSGMESSQLSVALDNLSLGYALTYLIGLVSLIVGARYLPKLQHQDLQTSAQQIARERGLDTDANRKVYLPVIRAYRVGPELVAWADGKNLRELGIYRQTGCYIERIRRNGILANPDGDAVLQMGDEIALVGYPDAHARLDPSFRNGKEVFDRDLLDMRIVTEEIVVKNHNAVGRRLAQLKLTDHGCFLNRVIRSQIEMPIDDNVVLNKGDVLQVSGDARRVKTVADRIGFISIHSQVTDLLAFCAFFIIGLMIGMITFQFSNFSFGIGNAAGLLFAGIMLGFLRANHPTFGYIPQGALNMVKEFGLMVFMAGVGLSAGSGIGNGLGAVGGQMLIAGLVVSLVPVIICFLFGAYVLRMNRALLFGAMMGARTCAPAMEIISDTARSNIPALGYAGTYAIANVLLTLAGTLIVIIWPGLG</sequence>
<name>Y2260_CITK8</name>
<feature type="chain" id="PRO_0000329138" description="Putative transport protein CKO_02260">
    <location>
        <begin position="1"/>
        <end position="561"/>
    </location>
</feature>
<feature type="transmembrane region" description="Helical" evidence="1">
    <location>
        <begin position="8"/>
        <end position="28"/>
    </location>
</feature>
<feature type="transmembrane region" description="Helical" evidence="1">
    <location>
        <begin position="32"/>
        <end position="52"/>
    </location>
</feature>
<feature type="transmembrane region" description="Helical" evidence="1">
    <location>
        <begin position="66"/>
        <end position="86"/>
    </location>
</feature>
<feature type="transmembrane region" description="Helical" evidence="1">
    <location>
        <begin position="94"/>
        <end position="114"/>
    </location>
</feature>
<feature type="transmembrane region" description="Helical" evidence="1">
    <location>
        <begin position="158"/>
        <end position="178"/>
    </location>
</feature>
<feature type="transmembrane region" description="Helical" evidence="1">
    <location>
        <begin position="383"/>
        <end position="403"/>
    </location>
</feature>
<feature type="transmembrane region" description="Helical" evidence="1">
    <location>
        <begin position="406"/>
        <end position="426"/>
    </location>
</feature>
<feature type="transmembrane region" description="Helical" evidence="1">
    <location>
        <begin position="447"/>
        <end position="467"/>
    </location>
</feature>
<feature type="transmembrane region" description="Helical" evidence="1">
    <location>
        <begin position="475"/>
        <end position="495"/>
    </location>
</feature>
<feature type="transmembrane region" description="Helical" evidence="1">
    <location>
        <begin position="540"/>
        <end position="560"/>
    </location>
</feature>
<feature type="domain" description="RCK C-terminal 1" evidence="1">
    <location>
        <begin position="200"/>
        <end position="288"/>
    </location>
</feature>
<feature type="domain" description="RCK C-terminal 2" evidence="1">
    <location>
        <begin position="292"/>
        <end position="373"/>
    </location>
</feature>
<proteinExistence type="inferred from homology"/>
<protein>
    <recommendedName>
        <fullName evidence="1">Putative transport protein CKO_02260</fullName>
    </recommendedName>
</protein>
<keyword id="KW-1003">Cell membrane</keyword>
<keyword id="KW-0472">Membrane</keyword>
<keyword id="KW-1185">Reference proteome</keyword>
<keyword id="KW-0677">Repeat</keyword>
<keyword id="KW-0812">Transmembrane</keyword>
<keyword id="KW-1133">Transmembrane helix</keyword>
<keyword id="KW-0813">Transport</keyword>
<evidence type="ECO:0000255" key="1">
    <source>
        <dbReference type="HAMAP-Rule" id="MF_01015"/>
    </source>
</evidence>
<reference key="1">
    <citation type="submission" date="2007-08" db="EMBL/GenBank/DDBJ databases">
        <authorList>
            <consortium name="The Citrobacter koseri Genome Sequencing Project"/>
            <person name="McClelland M."/>
            <person name="Sanderson E.K."/>
            <person name="Porwollik S."/>
            <person name="Spieth J."/>
            <person name="Clifton W.S."/>
            <person name="Latreille P."/>
            <person name="Courtney L."/>
            <person name="Wang C."/>
            <person name="Pepin K."/>
            <person name="Bhonagiri V."/>
            <person name="Nash W."/>
            <person name="Johnson M."/>
            <person name="Thiruvilangam P."/>
            <person name="Wilson R."/>
        </authorList>
    </citation>
    <scope>NUCLEOTIDE SEQUENCE [LARGE SCALE GENOMIC DNA]</scope>
    <source>
        <strain>ATCC BAA-895 / CDC 4225-83 / SGSC4696</strain>
    </source>
</reference>
<organism>
    <name type="scientific">Citrobacter koseri (strain ATCC BAA-895 / CDC 4225-83 / SGSC4696)</name>
    <dbReference type="NCBI Taxonomy" id="290338"/>
    <lineage>
        <taxon>Bacteria</taxon>
        <taxon>Pseudomonadati</taxon>
        <taxon>Pseudomonadota</taxon>
        <taxon>Gammaproteobacteria</taxon>
        <taxon>Enterobacterales</taxon>
        <taxon>Enterobacteriaceae</taxon>
        <taxon>Citrobacter</taxon>
    </lineage>
</organism>
<comment type="subcellular location">
    <subcellularLocation>
        <location evidence="1">Cell membrane</location>
        <topology evidence="1">Multi-pass membrane protein</topology>
    </subcellularLocation>
</comment>
<comment type="similarity">
    <text evidence="1">Belongs to the AAE transporter (TC 2.A.81) family. YbjL subfamily.</text>
</comment>
<accession>A8AIS0</accession>
<gene>
    <name type="ordered locus">CKO_02260</name>
</gene>
<dbReference type="EMBL" id="CP000822">
    <property type="protein sequence ID" value="ABV13383.1"/>
    <property type="molecule type" value="Genomic_DNA"/>
</dbReference>
<dbReference type="RefSeq" id="WP_012133110.1">
    <property type="nucleotide sequence ID" value="NC_009792.1"/>
</dbReference>
<dbReference type="SMR" id="A8AIS0"/>
<dbReference type="STRING" id="290338.CKO_02260"/>
<dbReference type="GeneID" id="45136181"/>
<dbReference type="KEGG" id="cko:CKO_02260"/>
<dbReference type="HOGENOM" id="CLU_035023_2_2_6"/>
<dbReference type="OrthoDB" id="5166626at2"/>
<dbReference type="Proteomes" id="UP000008148">
    <property type="component" value="Chromosome"/>
</dbReference>
<dbReference type="GO" id="GO:0005886">
    <property type="term" value="C:plasma membrane"/>
    <property type="evidence" value="ECO:0007669"/>
    <property type="project" value="UniProtKB-SubCell"/>
</dbReference>
<dbReference type="GO" id="GO:0008324">
    <property type="term" value="F:monoatomic cation transmembrane transporter activity"/>
    <property type="evidence" value="ECO:0007669"/>
    <property type="project" value="InterPro"/>
</dbReference>
<dbReference type="GO" id="GO:0006813">
    <property type="term" value="P:potassium ion transport"/>
    <property type="evidence" value="ECO:0007669"/>
    <property type="project" value="InterPro"/>
</dbReference>
<dbReference type="FunFam" id="3.30.70.1450:FF:000003">
    <property type="entry name" value="Putative transport protein YbjL"/>
    <property type="match status" value="1"/>
</dbReference>
<dbReference type="Gene3D" id="3.30.70.1450">
    <property type="entry name" value="Regulator of K+ conductance, C-terminal domain"/>
    <property type="match status" value="2"/>
</dbReference>
<dbReference type="HAMAP" id="MF_01015">
    <property type="entry name" value="YbjL"/>
    <property type="match status" value="1"/>
</dbReference>
<dbReference type="InterPro" id="IPR050144">
    <property type="entry name" value="AAE_transporter"/>
</dbReference>
<dbReference type="InterPro" id="IPR006037">
    <property type="entry name" value="RCK_C"/>
</dbReference>
<dbReference type="InterPro" id="IPR036721">
    <property type="entry name" value="RCK_C_sf"/>
</dbReference>
<dbReference type="InterPro" id="IPR023017">
    <property type="entry name" value="Transp_YbjL_put"/>
</dbReference>
<dbReference type="InterPro" id="IPR006512">
    <property type="entry name" value="YidE_YbjL"/>
</dbReference>
<dbReference type="NCBIfam" id="NF003440">
    <property type="entry name" value="PRK04972.1"/>
    <property type="match status" value="1"/>
</dbReference>
<dbReference type="NCBIfam" id="TIGR01625">
    <property type="entry name" value="YidE_YbjL_dupl"/>
    <property type="match status" value="2"/>
</dbReference>
<dbReference type="PANTHER" id="PTHR30445">
    <property type="entry name" value="K(+)_H(+) ANTIPORTER SUBUNIT KHTT"/>
    <property type="match status" value="1"/>
</dbReference>
<dbReference type="PANTHER" id="PTHR30445:SF10">
    <property type="entry name" value="TRANSPORT PROTEIN YBJL-RELATED"/>
    <property type="match status" value="1"/>
</dbReference>
<dbReference type="Pfam" id="PF06826">
    <property type="entry name" value="Asp-Al_Ex"/>
    <property type="match status" value="2"/>
</dbReference>
<dbReference type="Pfam" id="PF02080">
    <property type="entry name" value="TrkA_C"/>
    <property type="match status" value="2"/>
</dbReference>
<dbReference type="SUPFAM" id="SSF116726">
    <property type="entry name" value="TrkA C-terminal domain-like"/>
    <property type="match status" value="2"/>
</dbReference>
<dbReference type="PROSITE" id="PS51202">
    <property type="entry name" value="RCK_C"/>
    <property type="match status" value="2"/>
</dbReference>